<geneLocation type="plasmid">
    <name>pTT27</name>
</geneLocation>
<protein>
    <recommendedName>
        <fullName evidence="1">5-oxoprolinase subunit A</fullName>
        <shortName evidence="1">5-OPase subunit A</shortName>
        <ecNumber evidence="1">3.5.2.9</ecNumber>
    </recommendedName>
    <alternativeName>
        <fullName evidence="1">5-oxoprolinase (ATP-hydrolyzing) subunit A</fullName>
    </alternativeName>
</protein>
<sequence>MKVDLNADAGESYGAFAYGHDREIFPLVSSANLACGFHGGSPGRILEAVRLAKAHGVAVGAHPGFPDLVGFGRREMALSPEEVYADVLYQIGALSAFLKAEGLPLHHVKPHGALYLKACRDRETARAIALAVKAFDPGLPLVVLPGTVYEEEARKAGLRVVLEAFPERAYLRSGQLAPRSMPGSWITDPEEAARRALRMVLEGKVEALDGGEVAVRADTLCIHGDNPNAPEVARAVREALEQAGVEVRAF</sequence>
<name>PXPA_THET8</name>
<evidence type="ECO:0000255" key="1">
    <source>
        <dbReference type="HAMAP-Rule" id="MF_00691"/>
    </source>
</evidence>
<evidence type="ECO:0007829" key="2">
    <source>
        <dbReference type="PDB" id="2DFA"/>
    </source>
</evidence>
<reference key="1">
    <citation type="submission" date="2004-11" db="EMBL/GenBank/DDBJ databases">
        <title>Complete genome sequence of Thermus thermophilus HB8.</title>
        <authorList>
            <person name="Masui R."/>
            <person name="Kurokawa K."/>
            <person name="Nakagawa N."/>
            <person name="Tokunaga F."/>
            <person name="Koyama Y."/>
            <person name="Shibata T."/>
            <person name="Oshima T."/>
            <person name="Yokoyama S."/>
            <person name="Yasunaga T."/>
            <person name="Kuramitsu S."/>
        </authorList>
    </citation>
    <scope>NUCLEOTIDE SEQUENCE [LARGE SCALE GENOMIC DNA]</scope>
    <source>
        <strain>ATCC 27634 / DSM 579 / HB8</strain>
    </source>
</reference>
<reference key="2">
    <citation type="submission" date="2006-08" db="PDB data bank">
        <title>Crystal structure of lactam utilization protein from Thermus thermophilus HB8.</title>
        <authorList>
            <consortium name="RIKEN structural genomics initiative (RSGI)"/>
        </authorList>
    </citation>
    <scope>X-RAY CRYSTALLOGRAPHY (1.9 ANGSTROMS)</scope>
</reference>
<accession>Q53WG6</accession>
<comment type="function">
    <text evidence="1">Catalyzes the cleavage of 5-oxoproline to form L-glutamate coupled to the hydrolysis of ATP to ADP and inorganic phosphate.</text>
</comment>
<comment type="catalytic activity">
    <reaction evidence="1">
        <text>5-oxo-L-proline + ATP + 2 H2O = L-glutamate + ADP + phosphate + H(+)</text>
        <dbReference type="Rhea" id="RHEA:10348"/>
        <dbReference type="ChEBI" id="CHEBI:15377"/>
        <dbReference type="ChEBI" id="CHEBI:15378"/>
        <dbReference type="ChEBI" id="CHEBI:29985"/>
        <dbReference type="ChEBI" id="CHEBI:30616"/>
        <dbReference type="ChEBI" id="CHEBI:43474"/>
        <dbReference type="ChEBI" id="CHEBI:58402"/>
        <dbReference type="ChEBI" id="CHEBI:456216"/>
        <dbReference type="EC" id="3.5.2.9"/>
    </reaction>
</comment>
<comment type="subunit">
    <text evidence="1">Forms a complex composed of PxpA, PxpB and PxpC.</text>
</comment>
<comment type="similarity">
    <text evidence="1">Belongs to the LamB/PxpA family.</text>
</comment>
<dbReference type="EC" id="3.5.2.9" evidence="1"/>
<dbReference type="EMBL" id="AP008227">
    <property type="protein sequence ID" value="BAD71991.1"/>
    <property type="molecule type" value="Genomic_DNA"/>
</dbReference>
<dbReference type="RefSeq" id="WP_011229109.1">
    <property type="nucleotide sequence ID" value="NC_006462.1"/>
</dbReference>
<dbReference type="RefSeq" id="YP_145434.1">
    <property type="nucleotide sequence ID" value="NC_006462.1"/>
</dbReference>
<dbReference type="PDB" id="2DFA">
    <property type="method" value="X-ray"/>
    <property type="resolution" value="1.90 A"/>
    <property type="chains" value="A=1-250"/>
</dbReference>
<dbReference type="PDBsum" id="2DFA"/>
<dbReference type="SMR" id="Q53WG6"/>
<dbReference type="EnsemblBacteria" id="BAD71991">
    <property type="protein sequence ID" value="BAD71991"/>
    <property type="gene ID" value="BAD71991"/>
</dbReference>
<dbReference type="GeneID" id="3169274"/>
<dbReference type="KEGG" id="ttj:TTHB195"/>
<dbReference type="PATRIC" id="fig|300852.9.peg.2147"/>
<dbReference type="HOGENOM" id="CLU_069535_0_0_0"/>
<dbReference type="PhylomeDB" id="Q53WG6"/>
<dbReference type="EvolutionaryTrace" id="Q53WG6"/>
<dbReference type="Proteomes" id="UP000000532">
    <property type="component" value="Plasmid pTT27"/>
</dbReference>
<dbReference type="GO" id="GO:0017168">
    <property type="term" value="F:5-oxoprolinase (ATP-hydrolyzing) activity"/>
    <property type="evidence" value="ECO:0007669"/>
    <property type="project" value="UniProtKB-UniRule"/>
</dbReference>
<dbReference type="GO" id="GO:0005524">
    <property type="term" value="F:ATP binding"/>
    <property type="evidence" value="ECO:0007669"/>
    <property type="project" value="UniProtKB-UniRule"/>
</dbReference>
<dbReference type="GO" id="GO:0005975">
    <property type="term" value="P:carbohydrate metabolic process"/>
    <property type="evidence" value="ECO:0007669"/>
    <property type="project" value="InterPro"/>
</dbReference>
<dbReference type="CDD" id="cd10787">
    <property type="entry name" value="LamB_YcsF_like"/>
    <property type="match status" value="1"/>
</dbReference>
<dbReference type="Gene3D" id="3.20.20.370">
    <property type="entry name" value="Glycoside hydrolase/deacetylase"/>
    <property type="match status" value="1"/>
</dbReference>
<dbReference type="HAMAP" id="MF_00691">
    <property type="entry name" value="PxpA"/>
    <property type="match status" value="1"/>
</dbReference>
<dbReference type="InterPro" id="IPR011330">
    <property type="entry name" value="Glyco_hydro/deAcase_b/a-brl"/>
</dbReference>
<dbReference type="InterPro" id="IPR005501">
    <property type="entry name" value="LamB/YcsF/PxpA-like"/>
</dbReference>
<dbReference type="NCBIfam" id="NF003814">
    <property type="entry name" value="PRK05406.1-3"/>
    <property type="match status" value="1"/>
</dbReference>
<dbReference type="NCBIfam" id="NF003816">
    <property type="entry name" value="PRK05406.1-5"/>
    <property type="match status" value="1"/>
</dbReference>
<dbReference type="PANTHER" id="PTHR30292:SF0">
    <property type="entry name" value="5-OXOPROLINASE SUBUNIT A"/>
    <property type="match status" value="1"/>
</dbReference>
<dbReference type="PANTHER" id="PTHR30292">
    <property type="entry name" value="UNCHARACTERIZED PROTEIN YBGL-RELATED"/>
    <property type="match status" value="1"/>
</dbReference>
<dbReference type="Pfam" id="PF03746">
    <property type="entry name" value="LamB_YcsF"/>
    <property type="match status" value="1"/>
</dbReference>
<dbReference type="SUPFAM" id="SSF88713">
    <property type="entry name" value="Glycoside hydrolase/deacetylase"/>
    <property type="match status" value="1"/>
</dbReference>
<keyword id="KW-0002">3D-structure</keyword>
<keyword id="KW-0067">ATP-binding</keyword>
<keyword id="KW-0378">Hydrolase</keyword>
<keyword id="KW-0547">Nucleotide-binding</keyword>
<keyword id="KW-0614">Plasmid</keyword>
<keyword id="KW-1185">Reference proteome</keyword>
<feature type="chain" id="PRO_0000185056" description="5-oxoprolinase subunit A">
    <location>
        <begin position="1"/>
        <end position="250"/>
    </location>
</feature>
<feature type="strand" evidence="2">
    <location>
        <begin position="2"/>
        <end position="9"/>
    </location>
</feature>
<feature type="helix" evidence="2">
    <location>
        <begin position="21"/>
        <end position="24"/>
    </location>
</feature>
<feature type="turn" evidence="2">
    <location>
        <begin position="25"/>
        <end position="27"/>
    </location>
</feature>
<feature type="strand" evidence="2">
    <location>
        <begin position="29"/>
        <end position="34"/>
    </location>
</feature>
<feature type="strand" evidence="2">
    <location>
        <begin position="36"/>
        <end position="39"/>
    </location>
</feature>
<feature type="helix" evidence="2">
    <location>
        <begin position="42"/>
        <end position="54"/>
    </location>
</feature>
<feature type="strand" evidence="2">
    <location>
        <begin position="58"/>
        <end position="62"/>
    </location>
</feature>
<feature type="turn" evidence="2">
    <location>
        <begin position="68"/>
        <end position="72"/>
    </location>
</feature>
<feature type="helix" evidence="2">
    <location>
        <begin position="80"/>
        <end position="100"/>
    </location>
</feature>
<feature type="helix" evidence="2">
    <location>
        <begin position="112"/>
        <end position="120"/>
    </location>
</feature>
<feature type="helix" evidence="2">
    <location>
        <begin position="122"/>
        <end position="135"/>
    </location>
</feature>
<feature type="strand" evidence="2">
    <location>
        <begin position="141"/>
        <end position="143"/>
    </location>
</feature>
<feature type="helix" evidence="2">
    <location>
        <begin position="148"/>
        <end position="155"/>
    </location>
</feature>
<feature type="strand" evidence="2">
    <location>
        <begin position="160"/>
        <end position="164"/>
    </location>
</feature>
<feature type="strand" evidence="2">
    <location>
        <begin position="174"/>
        <end position="176"/>
    </location>
</feature>
<feature type="helix" evidence="2">
    <location>
        <begin position="189"/>
        <end position="201"/>
    </location>
</feature>
<feature type="strand" evidence="2">
    <location>
        <begin position="203"/>
        <end position="207"/>
    </location>
</feature>
<feature type="strand" evidence="2">
    <location>
        <begin position="210"/>
        <end position="214"/>
    </location>
</feature>
<feature type="strand" evidence="2">
    <location>
        <begin position="218"/>
        <end position="222"/>
    </location>
</feature>
<feature type="helix" evidence="2">
    <location>
        <begin position="229"/>
        <end position="241"/>
    </location>
</feature>
<feature type="turn" evidence="2">
    <location>
        <begin position="242"/>
        <end position="244"/>
    </location>
</feature>
<organism>
    <name type="scientific">Thermus thermophilus (strain ATCC 27634 / DSM 579 / HB8)</name>
    <dbReference type="NCBI Taxonomy" id="300852"/>
    <lineage>
        <taxon>Bacteria</taxon>
        <taxon>Thermotogati</taxon>
        <taxon>Deinococcota</taxon>
        <taxon>Deinococci</taxon>
        <taxon>Thermales</taxon>
        <taxon>Thermaceae</taxon>
        <taxon>Thermus</taxon>
    </lineage>
</organism>
<proteinExistence type="evidence at protein level"/>
<gene>
    <name evidence="1" type="primary">pxpA</name>
    <name type="ordered locus">TTHB195</name>
</gene>